<organismHost>
    <name type="scientific">Aves</name>
    <dbReference type="NCBI Taxonomy" id="8782"/>
</organismHost>
<organismHost>
    <name type="scientific">Cetacea</name>
    <name type="common">whales</name>
    <dbReference type="NCBI Taxonomy" id="9721"/>
</organismHost>
<organismHost>
    <name type="scientific">Homo sapiens</name>
    <name type="common">Human</name>
    <dbReference type="NCBI Taxonomy" id="9606"/>
</organismHost>
<organismHost>
    <name type="scientific">Phocidae</name>
    <name type="common">true seals</name>
    <dbReference type="NCBI Taxonomy" id="9709"/>
</organismHost>
<organismHost>
    <name type="scientific">Sus scrofa</name>
    <name type="common">Pig</name>
    <dbReference type="NCBI Taxonomy" id="9823"/>
</organismHost>
<accession>Q3YPZ4</accession>
<protein>
    <recommendedName>
        <fullName evidence="1">Matrix protein 2</fullName>
    </recommendedName>
    <alternativeName>
        <fullName evidence="1">Proton channel protein M2</fullName>
    </alternativeName>
</protein>
<organism>
    <name type="scientific">Influenza A virus (strain A/Memphis/1/1971 H3N2)</name>
    <dbReference type="NCBI Taxonomy" id="383586"/>
    <lineage>
        <taxon>Viruses</taxon>
        <taxon>Riboviria</taxon>
        <taxon>Orthornavirae</taxon>
        <taxon>Negarnaviricota</taxon>
        <taxon>Polyploviricotina</taxon>
        <taxon>Insthoviricetes</taxon>
        <taxon>Articulavirales</taxon>
        <taxon>Orthomyxoviridae</taxon>
        <taxon>Alphainfluenzavirus</taxon>
        <taxon>Alphainfluenzavirus influenzae</taxon>
        <taxon>Influenza A virus</taxon>
    </lineage>
</organism>
<proteinExistence type="evidence at protein level"/>
<comment type="function">
    <text evidence="1">Forms a proton-selective ion channel that is necessary for the efficient release of the viral genome during virus entry. After attaching to the cell surface, the virion enters the cell by endocytosis. Acidification of the endosome triggers M2 ion channel activity. The influx of protons into virion interior is believed to disrupt interactions between the viral ribonucleoprotein (RNP), matrix protein 1 (M1), and lipid bilayers, thereby freeing the viral genome from interaction with viral proteins and enabling RNA segments to migrate to the host cell nucleus, where influenza virus RNA transcription and replication occur. Also plays a role in viral proteins secretory pathway. Elevates the intravesicular pH of normally acidic compartments, such as trans-Golgi network, preventing newly formed hemagglutinin from premature switching to the fusion-active conformation.</text>
</comment>
<comment type="activity regulation">
    <text>The M2 protein from most influenza A strains is inhibited by amantadine and rimantadine, resulting in viral uncoating incapacity. Emergence of amantadine-resistant variants is usually rapid.</text>
</comment>
<comment type="subunit">
    <text evidence="1">Homotetramer; composed of two disulfide-linked dimers held together by non-covalent interactions. May interact with matrix protein 1.</text>
</comment>
<comment type="subcellular location">
    <subcellularLocation>
        <location evidence="1">Virion membrane</location>
    </subcellularLocation>
    <subcellularLocation>
        <location evidence="1">Host apical cell membrane</location>
        <topology evidence="1">Single-pass type III membrane protein</topology>
    </subcellularLocation>
    <text evidence="1">Abundantly expressed at the apical plasma membrane in infected polarized epithelial cells, in close proximity to budding and assembled virions. Minor component of virions (only 16-20 molecules/virion).</text>
</comment>
<comment type="alternative products">
    <event type="alternative splicing"/>
    <isoform>
        <id>Q3YPZ4-1</id>
        <name>M2</name>
        <sequence type="displayed"/>
    </isoform>
    <isoform>
        <id>Q3YPZ3-1</id>
        <name>M1</name>
        <sequence type="external"/>
    </isoform>
    <text>Only the first 9 residues are shared by the 2 isoforms.</text>
</comment>
<comment type="domain">
    <text evidence="1">Cytoplasmic tail plays an important role in virion assembly and morphogenesis.</text>
</comment>
<comment type="miscellaneous">
    <text evidence="1">When the channel is activated, one or more imidazole moieties of His-37 probably become bi-protonated.</text>
</comment>
<comment type="similarity">
    <text evidence="1">Belongs to the influenza viruses matrix protein M2 family.</text>
</comment>
<reference key="1">
    <citation type="submission" date="2005-08" db="EMBL/GenBank/DDBJ databases">
        <title>The NIAID influenza genome sequencing project.</title>
        <authorList>
            <person name="Ghedin E."/>
            <person name="Spiro D."/>
            <person name="Miller N."/>
            <person name="Zaborsky J."/>
            <person name="Feldblyum T."/>
            <person name="Subbu V."/>
            <person name="Shumway M."/>
            <person name="Sparenborg J."/>
            <person name="Groveman L."/>
            <person name="Halpin R."/>
            <person name="Sitz J."/>
            <person name="Koo H."/>
            <person name="Salzberg S.L."/>
            <person name="Webster R.G."/>
            <person name="Hoffmann E."/>
            <person name="Krauss S."/>
            <person name="Naeve C."/>
            <person name="Bao Y."/>
            <person name="Bolotov P."/>
            <person name="Dernovoy D."/>
            <person name="Kiryutin B."/>
            <person name="Lipman D.J."/>
            <person name="Tatusova T."/>
        </authorList>
    </citation>
    <scope>NUCLEOTIDE SEQUENCE [GENOMIC RNA]</scope>
</reference>
<sequence>MSLLTEVETPIKNEWGCRCNDSSDPLVVAASIIGILHLILWILDRLFFKCIYRFFEHGLKRGPSTEGVPESMREEYRKEQQSAVDADDSHFVSIELE</sequence>
<gene>
    <name evidence="1" type="primary">M</name>
</gene>
<dbReference type="EMBL" id="CY002497">
    <property type="protein sequence ID" value="AAZ80009.1"/>
    <property type="molecule type" value="Genomic_RNA"/>
</dbReference>
<dbReference type="PDB" id="6OUG">
    <property type="method" value="X-ray"/>
    <property type="resolution" value="3.01 A"/>
    <property type="chains" value="A/B/C/D/E/F/G/H=21-61"/>
</dbReference>
<dbReference type="PDBsum" id="6OUG"/>
<dbReference type="SMR" id="Q3YPZ4"/>
<dbReference type="IntAct" id="Q3YPZ4">
    <property type="interactions" value="1"/>
</dbReference>
<dbReference type="GlyCosmos" id="Q3YPZ4">
    <property type="glycosylation" value="1 site, No reported glycans"/>
</dbReference>
<dbReference type="Proteomes" id="UP000154307">
    <property type="component" value="Genome"/>
</dbReference>
<dbReference type="GO" id="GO:0020002">
    <property type="term" value="C:host cell plasma membrane"/>
    <property type="evidence" value="ECO:0007669"/>
    <property type="project" value="UniProtKB-SubCell"/>
</dbReference>
<dbReference type="GO" id="GO:0016020">
    <property type="term" value="C:membrane"/>
    <property type="evidence" value="ECO:0007669"/>
    <property type="project" value="UniProtKB-UniRule"/>
</dbReference>
<dbReference type="GO" id="GO:0055036">
    <property type="term" value="C:virion membrane"/>
    <property type="evidence" value="ECO:0007669"/>
    <property type="project" value="UniProtKB-SubCell"/>
</dbReference>
<dbReference type="GO" id="GO:0005216">
    <property type="term" value="F:monoatomic ion channel activity"/>
    <property type="evidence" value="ECO:0007669"/>
    <property type="project" value="UniProtKB-UniRule"/>
</dbReference>
<dbReference type="GO" id="GO:0015078">
    <property type="term" value="F:proton transmembrane transporter activity"/>
    <property type="evidence" value="ECO:0007669"/>
    <property type="project" value="UniProtKB-UniRule"/>
</dbReference>
<dbReference type="GO" id="GO:0051259">
    <property type="term" value="P:protein complex oligomerization"/>
    <property type="evidence" value="ECO:0007669"/>
    <property type="project" value="UniProtKB-UniRule"/>
</dbReference>
<dbReference type="GO" id="GO:0044694">
    <property type="term" value="P:symbiont genome entry into host cell via pore formation in plasma membrane"/>
    <property type="evidence" value="ECO:0007669"/>
    <property type="project" value="UniProtKB-UniRule"/>
</dbReference>
<dbReference type="GO" id="GO:0140321">
    <property type="term" value="P:symbiont-mediated suppression of host autophagy"/>
    <property type="evidence" value="ECO:0007669"/>
    <property type="project" value="UniProtKB-KW"/>
</dbReference>
<dbReference type="Gene3D" id="6.10.250.1640">
    <property type="match status" value="1"/>
</dbReference>
<dbReference type="HAMAP" id="MF_04069">
    <property type="entry name" value="INFV_M2"/>
    <property type="match status" value="1"/>
</dbReference>
<dbReference type="InterPro" id="IPR002089">
    <property type="entry name" value="Flu_M2"/>
</dbReference>
<dbReference type="Pfam" id="PF00599">
    <property type="entry name" value="Flu_M2"/>
    <property type="match status" value="1"/>
</dbReference>
<evidence type="ECO:0000255" key="1">
    <source>
        <dbReference type="HAMAP-Rule" id="MF_04069"/>
    </source>
</evidence>
<evidence type="ECO:0000256" key="2">
    <source>
        <dbReference type="SAM" id="MobiDB-lite"/>
    </source>
</evidence>
<evidence type="ECO:0007829" key="3">
    <source>
        <dbReference type="PDB" id="6OUG"/>
    </source>
</evidence>
<name>M2_I71A1</name>
<feature type="chain" id="PRO_0000326351" description="Matrix protein 2">
    <location>
        <begin position="1"/>
        <end position="97"/>
    </location>
</feature>
<feature type="topological domain" description="Virion surface" evidence="1">
    <location>
        <begin position="1"/>
        <end position="22"/>
    </location>
</feature>
<feature type="transmembrane region" description="Helical; Signal-anchor for type III membrane protein" evidence="1">
    <location>
        <begin position="23"/>
        <end position="43"/>
    </location>
</feature>
<feature type="topological domain" description="Intravirion" evidence="1">
    <location>
        <begin position="44"/>
        <end position="97"/>
    </location>
</feature>
<feature type="region of interest" description="Disordered" evidence="2">
    <location>
        <begin position="59"/>
        <end position="88"/>
    </location>
</feature>
<feature type="compositionally biased region" description="Basic and acidic residues" evidence="2">
    <location>
        <begin position="71"/>
        <end position="80"/>
    </location>
</feature>
<feature type="site" description="Essential for channel activity, possibly by being protonated during channel activation, and by forming the channel gate and the selective filter" evidence="1">
    <location>
        <position position="37"/>
    </location>
</feature>
<feature type="site" description="Seems to be involved in pH gating" evidence="1">
    <location>
        <position position="41"/>
    </location>
</feature>
<feature type="modified residue" description="Phosphoserine; by host" evidence="1">
    <location>
        <position position="64"/>
    </location>
</feature>
<feature type="modified residue" description="Phosphoserine; by host" evidence="1">
    <location>
        <position position="82"/>
    </location>
</feature>
<feature type="modified residue" description="Phosphoserine; by host" evidence="1">
    <location>
        <position position="93"/>
    </location>
</feature>
<feature type="lipid moiety-binding region" description="S-palmitoyl cysteine; by host" evidence="1">
    <location>
        <position position="50"/>
    </location>
</feature>
<feature type="glycosylation site" description="N-linked (GlcNAc...) asparagine; by host" evidence="1">
    <location>
        <position position="20"/>
    </location>
</feature>
<feature type="disulfide bond" description="Interchain (with C-17)" evidence="1">
    <location>
        <position position="17"/>
    </location>
</feature>
<feature type="disulfide bond" description="Interchain (with C-19)" evidence="1">
    <location>
        <position position="19"/>
    </location>
</feature>
<feature type="helix" evidence="3">
    <location>
        <begin position="25"/>
        <end position="51"/>
    </location>
</feature>
<feature type="turn" evidence="3">
    <location>
        <begin position="52"/>
        <end position="55"/>
    </location>
</feature>
<keyword id="KW-0002">3D-structure</keyword>
<keyword id="KW-0025">Alternative splicing</keyword>
<keyword id="KW-1015">Disulfide bond</keyword>
<keyword id="KW-0325">Glycoprotein</keyword>
<keyword id="KW-1032">Host cell membrane</keyword>
<keyword id="KW-1043">Host membrane</keyword>
<keyword id="KW-0945">Host-virus interaction</keyword>
<keyword id="KW-0375">Hydrogen ion transport</keyword>
<keyword id="KW-1083">Inhibition of host autophagy by virus</keyword>
<keyword id="KW-0407">Ion channel</keyword>
<keyword id="KW-0406">Ion transport</keyword>
<keyword id="KW-0449">Lipoprotein</keyword>
<keyword id="KW-0472">Membrane</keyword>
<keyword id="KW-0564">Palmitate</keyword>
<keyword id="KW-0597">Phosphoprotein</keyword>
<keyword id="KW-0735">Signal-anchor</keyword>
<keyword id="KW-0812">Transmembrane</keyword>
<keyword id="KW-1133">Transmembrane helix</keyword>
<keyword id="KW-0813">Transport</keyword>
<keyword id="KW-1182">Viral ion channel</keyword>
<keyword id="KW-0946">Virion</keyword>